<organism>
    <name type="scientific">Flavobacterium psychrophilum (strain ATCC 49511 / DSM 21280 / CIP 103535 / JIP02/86)</name>
    <dbReference type="NCBI Taxonomy" id="402612"/>
    <lineage>
        <taxon>Bacteria</taxon>
        <taxon>Pseudomonadati</taxon>
        <taxon>Bacteroidota</taxon>
        <taxon>Flavobacteriia</taxon>
        <taxon>Flavobacteriales</taxon>
        <taxon>Flavobacteriaceae</taxon>
        <taxon>Flavobacterium</taxon>
    </lineage>
</organism>
<reference key="1">
    <citation type="journal article" date="2007" name="Nat. Biotechnol.">
        <title>Complete genome sequence of the fish pathogen Flavobacterium psychrophilum.</title>
        <authorList>
            <person name="Duchaud E."/>
            <person name="Boussaha M."/>
            <person name="Loux V."/>
            <person name="Bernardet J.-F."/>
            <person name="Michel C."/>
            <person name="Kerouault B."/>
            <person name="Mondot S."/>
            <person name="Nicolas P."/>
            <person name="Bossy R."/>
            <person name="Caron C."/>
            <person name="Bessieres P."/>
            <person name="Gibrat J.-F."/>
            <person name="Claverol S."/>
            <person name="Dumetz F."/>
            <person name="Le Henaff M."/>
            <person name="Benmansour A."/>
        </authorList>
    </citation>
    <scope>NUCLEOTIDE SEQUENCE [LARGE SCALE GENOMIC DNA]</scope>
    <source>
        <strain>ATCC 49511 / DSM 21280 / CIP 103535 / JIP02/86</strain>
    </source>
</reference>
<name>NUOB_FLAPJ</name>
<keyword id="KW-0004">4Fe-4S</keyword>
<keyword id="KW-0997">Cell inner membrane</keyword>
<keyword id="KW-1003">Cell membrane</keyword>
<keyword id="KW-0408">Iron</keyword>
<keyword id="KW-0411">Iron-sulfur</keyword>
<keyword id="KW-0472">Membrane</keyword>
<keyword id="KW-0479">Metal-binding</keyword>
<keyword id="KW-0520">NAD</keyword>
<keyword id="KW-0874">Quinone</keyword>
<keyword id="KW-1185">Reference proteome</keyword>
<keyword id="KW-1278">Translocase</keyword>
<keyword id="KW-0813">Transport</keyword>
<evidence type="ECO:0000255" key="1">
    <source>
        <dbReference type="HAMAP-Rule" id="MF_01356"/>
    </source>
</evidence>
<sequence length="181" mass="19905">MSSNINIVEAPEGVTGEGFFATKLNDVVGLARANSMWPLPFATSCCGIEFMATMASHYDLARFGSERVSFSPRQADMLMVMGTISKKMAPILRQVYEQMAEPRWVIAVGACASSGGIFDTYSVLQGIDKVIPVDVYVPGCPPRPEQIVDGVMRLQELVKSESVRRRSSPEYQELLASYNIK</sequence>
<feature type="chain" id="PRO_0000376225" description="NADH-quinone oxidoreductase subunit B">
    <location>
        <begin position="1"/>
        <end position="181"/>
    </location>
</feature>
<feature type="binding site" evidence="1">
    <location>
        <position position="45"/>
    </location>
    <ligand>
        <name>[4Fe-4S] cluster</name>
        <dbReference type="ChEBI" id="CHEBI:49883"/>
    </ligand>
</feature>
<feature type="binding site" evidence="1">
    <location>
        <position position="46"/>
    </location>
    <ligand>
        <name>[4Fe-4S] cluster</name>
        <dbReference type="ChEBI" id="CHEBI:49883"/>
    </ligand>
</feature>
<feature type="binding site" evidence="1">
    <location>
        <position position="111"/>
    </location>
    <ligand>
        <name>[4Fe-4S] cluster</name>
        <dbReference type="ChEBI" id="CHEBI:49883"/>
    </ligand>
</feature>
<feature type="binding site" evidence="1">
    <location>
        <position position="140"/>
    </location>
    <ligand>
        <name>[4Fe-4S] cluster</name>
        <dbReference type="ChEBI" id="CHEBI:49883"/>
    </ligand>
</feature>
<comment type="function">
    <text evidence="1">NDH-1 shuttles electrons from NADH, via FMN and iron-sulfur (Fe-S) centers, to quinones in the respiratory chain. The immediate electron acceptor for the enzyme in this species is believed to be a menaquinone. Couples the redox reaction to proton translocation (for every two electrons transferred, four hydrogen ions are translocated across the cytoplasmic membrane), and thus conserves the redox energy in a proton gradient.</text>
</comment>
<comment type="catalytic activity">
    <reaction evidence="1">
        <text>a quinone + NADH + 5 H(+)(in) = a quinol + NAD(+) + 4 H(+)(out)</text>
        <dbReference type="Rhea" id="RHEA:57888"/>
        <dbReference type="ChEBI" id="CHEBI:15378"/>
        <dbReference type="ChEBI" id="CHEBI:24646"/>
        <dbReference type="ChEBI" id="CHEBI:57540"/>
        <dbReference type="ChEBI" id="CHEBI:57945"/>
        <dbReference type="ChEBI" id="CHEBI:132124"/>
    </reaction>
</comment>
<comment type="cofactor">
    <cofactor evidence="1">
        <name>[4Fe-4S] cluster</name>
        <dbReference type="ChEBI" id="CHEBI:49883"/>
    </cofactor>
    <text evidence="1">Binds 1 [4Fe-4S] cluster.</text>
</comment>
<comment type="subunit">
    <text evidence="1">NDH-1 is composed of 14 different subunits. Subunits NuoB, C, D, E, F, and G constitute the peripheral sector of the complex.</text>
</comment>
<comment type="subcellular location">
    <subcellularLocation>
        <location evidence="1">Cell inner membrane</location>
        <topology evidence="1">Peripheral membrane protein</topology>
        <orientation evidence="1">Cytoplasmic side</orientation>
    </subcellularLocation>
</comment>
<comment type="similarity">
    <text evidence="1">Belongs to the complex I 20 kDa subunit family.</text>
</comment>
<gene>
    <name evidence="1" type="primary">nuoB</name>
    <name type="ordered locus">FP2231</name>
</gene>
<proteinExistence type="inferred from homology"/>
<accession>A6H1R3</accession>
<dbReference type="EC" id="7.1.1.-" evidence="1"/>
<dbReference type="EMBL" id="AM398681">
    <property type="protein sequence ID" value="CAL44287.1"/>
    <property type="molecule type" value="Genomic_DNA"/>
</dbReference>
<dbReference type="RefSeq" id="WP_011964321.1">
    <property type="nucleotide sequence ID" value="NC_009613.3"/>
</dbReference>
<dbReference type="RefSeq" id="YP_001297088.1">
    <property type="nucleotide sequence ID" value="NC_009613.3"/>
</dbReference>
<dbReference type="SMR" id="A6H1R3"/>
<dbReference type="STRING" id="402612.FP2231"/>
<dbReference type="EnsemblBacteria" id="CAL44287">
    <property type="protein sequence ID" value="CAL44287"/>
    <property type="gene ID" value="FP2231"/>
</dbReference>
<dbReference type="KEGG" id="fps:FP2231"/>
<dbReference type="PATRIC" id="fig|402612.5.peg.2281"/>
<dbReference type="eggNOG" id="COG0377">
    <property type="taxonomic scope" value="Bacteria"/>
</dbReference>
<dbReference type="HOGENOM" id="CLU_055737_7_3_10"/>
<dbReference type="OrthoDB" id="9786737at2"/>
<dbReference type="Proteomes" id="UP000006394">
    <property type="component" value="Chromosome"/>
</dbReference>
<dbReference type="GO" id="GO:0005886">
    <property type="term" value="C:plasma membrane"/>
    <property type="evidence" value="ECO:0007669"/>
    <property type="project" value="UniProtKB-SubCell"/>
</dbReference>
<dbReference type="GO" id="GO:0045271">
    <property type="term" value="C:respiratory chain complex I"/>
    <property type="evidence" value="ECO:0007669"/>
    <property type="project" value="TreeGrafter"/>
</dbReference>
<dbReference type="GO" id="GO:0051539">
    <property type="term" value="F:4 iron, 4 sulfur cluster binding"/>
    <property type="evidence" value="ECO:0007669"/>
    <property type="project" value="UniProtKB-KW"/>
</dbReference>
<dbReference type="GO" id="GO:0005506">
    <property type="term" value="F:iron ion binding"/>
    <property type="evidence" value="ECO:0007669"/>
    <property type="project" value="UniProtKB-UniRule"/>
</dbReference>
<dbReference type="GO" id="GO:0008137">
    <property type="term" value="F:NADH dehydrogenase (ubiquinone) activity"/>
    <property type="evidence" value="ECO:0007669"/>
    <property type="project" value="InterPro"/>
</dbReference>
<dbReference type="GO" id="GO:0050136">
    <property type="term" value="F:NADH:ubiquinone reductase (non-electrogenic) activity"/>
    <property type="evidence" value="ECO:0007669"/>
    <property type="project" value="UniProtKB-UniRule"/>
</dbReference>
<dbReference type="GO" id="GO:0048038">
    <property type="term" value="F:quinone binding"/>
    <property type="evidence" value="ECO:0007669"/>
    <property type="project" value="UniProtKB-KW"/>
</dbReference>
<dbReference type="GO" id="GO:0009060">
    <property type="term" value="P:aerobic respiration"/>
    <property type="evidence" value="ECO:0007669"/>
    <property type="project" value="TreeGrafter"/>
</dbReference>
<dbReference type="GO" id="GO:0015990">
    <property type="term" value="P:electron transport coupled proton transport"/>
    <property type="evidence" value="ECO:0007669"/>
    <property type="project" value="TreeGrafter"/>
</dbReference>
<dbReference type="FunFam" id="3.40.50.12280:FF:000002">
    <property type="entry name" value="NADH-quinone oxidoreductase subunit B"/>
    <property type="match status" value="1"/>
</dbReference>
<dbReference type="Gene3D" id="3.40.50.12280">
    <property type="match status" value="1"/>
</dbReference>
<dbReference type="HAMAP" id="MF_01356">
    <property type="entry name" value="NDH1_NuoB"/>
    <property type="match status" value="1"/>
</dbReference>
<dbReference type="InterPro" id="IPR006137">
    <property type="entry name" value="NADH_UbQ_OxRdtase-like_20kDa"/>
</dbReference>
<dbReference type="InterPro" id="IPR006138">
    <property type="entry name" value="NADH_UQ_OxRdtase_20Kd_su"/>
</dbReference>
<dbReference type="NCBIfam" id="TIGR01957">
    <property type="entry name" value="nuoB_fam"/>
    <property type="match status" value="1"/>
</dbReference>
<dbReference type="NCBIfam" id="NF005012">
    <property type="entry name" value="PRK06411.1"/>
    <property type="match status" value="1"/>
</dbReference>
<dbReference type="NCBIfam" id="NF011395">
    <property type="entry name" value="PRK14820.1"/>
    <property type="match status" value="1"/>
</dbReference>
<dbReference type="PANTHER" id="PTHR11995">
    <property type="entry name" value="NADH DEHYDROGENASE"/>
    <property type="match status" value="1"/>
</dbReference>
<dbReference type="PANTHER" id="PTHR11995:SF14">
    <property type="entry name" value="NADH DEHYDROGENASE [UBIQUINONE] IRON-SULFUR PROTEIN 7, MITOCHONDRIAL"/>
    <property type="match status" value="1"/>
</dbReference>
<dbReference type="Pfam" id="PF01058">
    <property type="entry name" value="Oxidored_q6"/>
    <property type="match status" value="1"/>
</dbReference>
<dbReference type="SUPFAM" id="SSF56770">
    <property type="entry name" value="HydA/Nqo6-like"/>
    <property type="match status" value="1"/>
</dbReference>
<dbReference type="PROSITE" id="PS01150">
    <property type="entry name" value="COMPLEX1_20K"/>
    <property type="match status" value="1"/>
</dbReference>
<protein>
    <recommendedName>
        <fullName evidence="1">NADH-quinone oxidoreductase subunit B</fullName>
        <ecNumber evidence="1">7.1.1.-</ecNumber>
    </recommendedName>
    <alternativeName>
        <fullName evidence="1">NADH dehydrogenase I subunit B</fullName>
    </alternativeName>
    <alternativeName>
        <fullName evidence="1">NDH-1 subunit B</fullName>
    </alternativeName>
</protein>